<keyword id="KW-1185">Reference proteome</keyword>
<gene>
    <name evidence="1" type="primary">rnfH</name>
    <name type="ordered locus">PSHAa0843</name>
</gene>
<accession>Q3IE34</accession>
<sequence length="107" mass="11902">MIDVEVVFALPETATSLTIEVVKGTTVEQAVIQSGIIEKHPEIDATALTLGVWNRTVKPNQELKEGDRIEIYRPLIADPKDARRKRAEKAKEEGRANKVTGGRPIER</sequence>
<comment type="similarity">
    <text evidence="1">Belongs to the UPF0125 (RnfH) family.</text>
</comment>
<evidence type="ECO:0000255" key="1">
    <source>
        <dbReference type="HAMAP-Rule" id="MF_00460"/>
    </source>
</evidence>
<evidence type="ECO:0000256" key="2">
    <source>
        <dbReference type="SAM" id="MobiDB-lite"/>
    </source>
</evidence>
<proteinExistence type="inferred from homology"/>
<dbReference type="EMBL" id="CR954246">
    <property type="protein sequence ID" value="CAI85924.1"/>
    <property type="molecule type" value="Genomic_DNA"/>
</dbReference>
<dbReference type="SMR" id="Q3IE34"/>
<dbReference type="STRING" id="326442.PSHAa0843"/>
<dbReference type="KEGG" id="pha:PSHAa0843"/>
<dbReference type="PATRIC" id="fig|326442.8.peg.805"/>
<dbReference type="eggNOG" id="COG2914">
    <property type="taxonomic scope" value="Bacteria"/>
</dbReference>
<dbReference type="HOGENOM" id="CLU_150721_1_0_6"/>
<dbReference type="BioCyc" id="PHAL326442:PSHA_RS04115-MONOMER"/>
<dbReference type="Proteomes" id="UP000006843">
    <property type="component" value="Chromosome I"/>
</dbReference>
<dbReference type="Gene3D" id="3.10.20.280">
    <property type="entry name" value="RnfH-like"/>
    <property type="match status" value="1"/>
</dbReference>
<dbReference type="HAMAP" id="MF_00460">
    <property type="entry name" value="UPF0125_RnfH"/>
    <property type="match status" value="1"/>
</dbReference>
<dbReference type="InterPro" id="IPR016155">
    <property type="entry name" value="Mopterin_synth/thiamin_S_b"/>
</dbReference>
<dbReference type="InterPro" id="IPR005346">
    <property type="entry name" value="RnfH"/>
</dbReference>
<dbReference type="InterPro" id="IPR037021">
    <property type="entry name" value="RnfH_sf"/>
</dbReference>
<dbReference type="NCBIfam" id="NF002490">
    <property type="entry name" value="PRK01777.1"/>
    <property type="match status" value="1"/>
</dbReference>
<dbReference type="PANTHER" id="PTHR37483">
    <property type="entry name" value="UPF0125 PROTEIN RATB"/>
    <property type="match status" value="1"/>
</dbReference>
<dbReference type="PANTHER" id="PTHR37483:SF1">
    <property type="entry name" value="UPF0125 PROTEIN RATB"/>
    <property type="match status" value="1"/>
</dbReference>
<dbReference type="Pfam" id="PF03658">
    <property type="entry name" value="Ub-RnfH"/>
    <property type="match status" value="1"/>
</dbReference>
<dbReference type="SUPFAM" id="SSF54285">
    <property type="entry name" value="MoaD/ThiS"/>
    <property type="match status" value="1"/>
</dbReference>
<name>RNFH_PSET1</name>
<reference key="1">
    <citation type="journal article" date="2005" name="Genome Res.">
        <title>Coping with cold: the genome of the versatile marine Antarctica bacterium Pseudoalteromonas haloplanktis TAC125.</title>
        <authorList>
            <person name="Medigue C."/>
            <person name="Krin E."/>
            <person name="Pascal G."/>
            <person name="Barbe V."/>
            <person name="Bernsel A."/>
            <person name="Bertin P.N."/>
            <person name="Cheung F."/>
            <person name="Cruveiller S."/>
            <person name="D'Amico S."/>
            <person name="Duilio A."/>
            <person name="Fang G."/>
            <person name="Feller G."/>
            <person name="Ho C."/>
            <person name="Mangenot S."/>
            <person name="Marino G."/>
            <person name="Nilsson J."/>
            <person name="Parrilli E."/>
            <person name="Rocha E.P.C."/>
            <person name="Rouy Z."/>
            <person name="Sekowska A."/>
            <person name="Tutino M.L."/>
            <person name="Vallenet D."/>
            <person name="von Heijne G."/>
            <person name="Danchin A."/>
        </authorList>
    </citation>
    <scope>NUCLEOTIDE SEQUENCE [LARGE SCALE GENOMIC DNA]</scope>
    <source>
        <strain>TAC 125</strain>
    </source>
</reference>
<feature type="chain" id="PRO_1000013588" description="Protein RnfH">
    <location>
        <begin position="1"/>
        <end position="107"/>
    </location>
</feature>
<feature type="region of interest" description="Disordered" evidence="2">
    <location>
        <begin position="82"/>
        <end position="107"/>
    </location>
</feature>
<organism>
    <name type="scientific">Pseudoalteromonas translucida (strain TAC 125)</name>
    <dbReference type="NCBI Taxonomy" id="326442"/>
    <lineage>
        <taxon>Bacteria</taxon>
        <taxon>Pseudomonadati</taxon>
        <taxon>Pseudomonadota</taxon>
        <taxon>Gammaproteobacteria</taxon>
        <taxon>Alteromonadales</taxon>
        <taxon>Pseudoalteromonadaceae</taxon>
        <taxon>Pseudoalteromonas</taxon>
    </lineage>
</organism>
<protein>
    <recommendedName>
        <fullName evidence="1">Protein RnfH</fullName>
    </recommendedName>
</protein>